<evidence type="ECO:0000255" key="1"/>
<evidence type="ECO:0000305" key="2"/>
<comment type="subcellular location">
    <subcellularLocation>
        <location>Cell inner membrane</location>
        <topology>Multi-pass membrane protein</topology>
    </subcellularLocation>
</comment>
<comment type="similarity">
    <text evidence="2">Belongs to the sodium:solute symporter (SSF) (TC 2.A.21) family.</text>
</comment>
<keyword id="KW-0997">Cell inner membrane</keyword>
<keyword id="KW-1003">Cell membrane</keyword>
<keyword id="KW-0406">Ion transport</keyword>
<keyword id="KW-0472">Membrane</keyword>
<keyword id="KW-1185">Reference proteome</keyword>
<keyword id="KW-0915">Sodium</keyword>
<keyword id="KW-0739">Sodium transport</keyword>
<keyword id="KW-0769">Symport</keyword>
<keyword id="KW-0812">Transmembrane</keyword>
<keyword id="KW-1133">Transmembrane helix</keyword>
<keyword id="KW-0813">Transport</keyword>
<feature type="chain" id="PRO_0000105406" description="Uncharacterized symporter YidK">
    <location>
        <begin position="1"/>
        <end position="571"/>
    </location>
</feature>
<feature type="topological domain" description="Cytoplasmic" evidence="1">
    <location>
        <begin position="1"/>
        <end position="3"/>
    </location>
</feature>
<feature type="transmembrane region" description="Helical" evidence="1">
    <location>
        <begin position="4"/>
        <end position="24"/>
    </location>
</feature>
<feature type="topological domain" description="Periplasmic" evidence="1">
    <location>
        <begin position="25"/>
        <end position="74"/>
    </location>
</feature>
<feature type="transmembrane region" description="Helical" evidence="1">
    <location>
        <begin position="75"/>
        <end position="95"/>
    </location>
</feature>
<feature type="topological domain" description="Cytoplasmic" evidence="1">
    <location>
        <begin position="96"/>
        <end position="118"/>
    </location>
</feature>
<feature type="transmembrane region" description="Helical" evidence="1">
    <location>
        <begin position="119"/>
        <end position="139"/>
    </location>
</feature>
<feature type="topological domain" description="Periplasmic" evidence="1">
    <location>
        <begin position="140"/>
        <end position="162"/>
    </location>
</feature>
<feature type="transmembrane region" description="Helical" evidence="1">
    <location>
        <begin position="163"/>
        <end position="183"/>
    </location>
</feature>
<feature type="topological domain" description="Cytoplasmic" evidence="1">
    <location>
        <begin position="184"/>
        <end position="191"/>
    </location>
</feature>
<feature type="transmembrane region" description="Helical" evidence="1">
    <location>
        <begin position="192"/>
        <end position="212"/>
    </location>
</feature>
<feature type="topological domain" description="Periplasmic" evidence="1">
    <location>
        <begin position="213"/>
        <end position="240"/>
    </location>
</feature>
<feature type="transmembrane region" description="Helical" evidence="1">
    <location>
        <begin position="241"/>
        <end position="261"/>
    </location>
</feature>
<feature type="topological domain" description="Cytoplasmic" evidence="1">
    <location>
        <begin position="262"/>
        <end position="283"/>
    </location>
</feature>
<feature type="transmembrane region" description="Helical" evidence="1">
    <location>
        <begin position="284"/>
        <end position="304"/>
    </location>
</feature>
<feature type="topological domain" description="Periplasmic" evidence="1">
    <location>
        <begin position="305"/>
        <end position="324"/>
    </location>
</feature>
<feature type="transmembrane region" description="Helical" evidence="1">
    <location>
        <begin position="325"/>
        <end position="345"/>
    </location>
</feature>
<feature type="topological domain" description="Cytoplasmic" evidence="1">
    <location>
        <begin position="346"/>
        <end position="380"/>
    </location>
</feature>
<feature type="transmembrane region" description="Helical" evidence="1">
    <location>
        <begin position="381"/>
        <end position="401"/>
    </location>
</feature>
<feature type="topological domain" description="Periplasmic" evidence="1">
    <location>
        <begin position="402"/>
        <end position="415"/>
    </location>
</feature>
<feature type="transmembrane region" description="Helical" evidence="1">
    <location>
        <begin position="416"/>
        <end position="436"/>
    </location>
</feature>
<feature type="topological domain" description="Cytoplasmic" evidence="1">
    <location>
        <position position="437"/>
    </location>
</feature>
<feature type="transmembrane region" description="Helical" evidence="1">
    <location>
        <begin position="438"/>
        <end position="458"/>
    </location>
</feature>
<feature type="topological domain" description="Periplasmic" evidence="1">
    <location>
        <begin position="459"/>
        <end position="460"/>
    </location>
</feature>
<feature type="transmembrane region" description="Helical" evidence="1">
    <location>
        <begin position="461"/>
        <end position="481"/>
    </location>
</feature>
<feature type="topological domain" description="Cytoplasmic" evidence="1">
    <location>
        <begin position="482"/>
        <end position="505"/>
    </location>
</feature>
<feature type="transmembrane region" description="Helical" evidence="1">
    <location>
        <begin position="506"/>
        <end position="526"/>
    </location>
</feature>
<feature type="topological domain" description="Periplasmic" evidence="1">
    <location>
        <begin position="527"/>
        <end position="532"/>
    </location>
</feature>
<feature type="transmembrane region" description="Helical" evidence="1">
    <location>
        <begin position="533"/>
        <end position="553"/>
    </location>
</feature>
<feature type="topological domain" description="Cytoplasmic" evidence="1">
    <location>
        <begin position="554"/>
        <end position="571"/>
    </location>
</feature>
<name>YIDK_ECOLI</name>
<accession>P31448</accession>
<accession>Q2M7Z2</accession>
<protein>
    <recommendedName>
        <fullName>Uncharacterized symporter YidK</fullName>
    </recommendedName>
</protein>
<reference key="1">
    <citation type="journal article" date="1993" name="Genomics">
        <title>DNA sequence and analysis of 136 kilobases of the Escherichia coli genome: organizational symmetry around the origin of replication.</title>
        <authorList>
            <person name="Burland V.D."/>
            <person name="Plunkett G. III"/>
            <person name="Daniels D.L."/>
            <person name="Blattner F.R."/>
        </authorList>
    </citation>
    <scope>NUCLEOTIDE SEQUENCE [LARGE SCALE GENOMIC DNA]</scope>
    <source>
        <strain>K12 / MG1655 / ATCC 47076</strain>
    </source>
</reference>
<reference key="2">
    <citation type="journal article" date="1997" name="Science">
        <title>The complete genome sequence of Escherichia coli K-12.</title>
        <authorList>
            <person name="Blattner F.R."/>
            <person name="Plunkett G. III"/>
            <person name="Bloch C.A."/>
            <person name="Perna N.T."/>
            <person name="Burland V."/>
            <person name="Riley M."/>
            <person name="Collado-Vides J."/>
            <person name="Glasner J.D."/>
            <person name="Rode C.K."/>
            <person name="Mayhew G.F."/>
            <person name="Gregor J."/>
            <person name="Davis N.W."/>
            <person name="Kirkpatrick H.A."/>
            <person name="Goeden M.A."/>
            <person name="Rose D.J."/>
            <person name="Mau B."/>
            <person name="Shao Y."/>
        </authorList>
    </citation>
    <scope>NUCLEOTIDE SEQUENCE [LARGE SCALE GENOMIC DNA]</scope>
    <source>
        <strain>K12 / MG1655 / ATCC 47076</strain>
    </source>
</reference>
<reference key="3">
    <citation type="journal article" date="2006" name="Mol. Syst. Biol.">
        <title>Highly accurate genome sequences of Escherichia coli K-12 strains MG1655 and W3110.</title>
        <authorList>
            <person name="Hayashi K."/>
            <person name="Morooka N."/>
            <person name="Yamamoto Y."/>
            <person name="Fujita K."/>
            <person name="Isono K."/>
            <person name="Choi S."/>
            <person name="Ohtsubo E."/>
            <person name="Baba T."/>
            <person name="Wanner B.L."/>
            <person name="Mori H."/>
            <person name="Horiuchi T."/>
        </authorList>
    </citation>
    <scope>NUCLEOTIDE SEQUENCE [LARGE SCALE GENOMIC DNA]</scope>
    <source>
        <strain>K12 / W3110 / ATCC 27325 / DSM 5911</strain>
    </source>
</reference>
<reference key="4">
    <citation type="journal article" date="2005" name="Science">
        <title>Global topology analysis of the Escherichia coli inner membrane proteome.</title>
        <authorList>
            <person name="Daley D.O."/>
            <person name="Rapp M."/>
            <person name="Granseth E."/>
            <person name="Melen K."/>
            <person name="Drew D."/>
            <person name="von Heijne G."/>
        </authorList>
    </citation>
    <scope>TOPOLOGY [LARGE SCALE ANALYSIS]</scope>
    <source>
        <strain>K12 / MG1655 / ATCC 47076</strain>
    </source>
</reference>
<gene>
    <name type="primary">yidK</name>
    <name type="ordered locus">b3679</name>
    <name type="ordered locus">JW3655</name>
</gene>
<proteinExistence type="evidence at protein level"/>
<dbReference type="EMBL" id="L10328">
    <property type="protein sequence ID" value="AAA62031.1"/>
    <property type="molecule type" value="Genomic_DNA"/>
</dbReference>
<dbReference type="EMBL" id="U00096">
    <property type="protein sequence ID" value="AAC76702.1"/>
    <property type="molecule type" value="Genomic_DNA"/>
</dbReference>
<dbReference type="EMBL" id="AP009048">
    <property type="protein sequence ID" value="BAE77614.1"/>
    <property type="molecule type" value="Genomic_DNA"/>
</dbReference>
<dbReference type="PIR" id="H65169">
    <property type="entry name" value="H65169"/>
</dbReference>
<dbReference type="RefSeq" id="NP_418135.1">
    <property type="nucleotide sequence ID" value="NC_000913.3"/>
</dbReference>
<dbReference type="RefSeq" id="WP_001087145.1">
    <property type="nucleotide sequence ID" value="NZ_SSZK01000035.1"/>
</dbReference>
<dbReference type="SMR" id="P31448"/>
<dbReference type="BioGRID" id="4261452">
    <property type="interactions" value="166"/>
</dbReference>
<dbReference type="DIP" id="DIP-12450N"/>
<dbReference type="FunCoup" id="P31448">
    <property type="interactions" value="276"/>
</dbReference>
<dbReference type="IntAct" id="P31448">
    <property type="interactions" value="5"/>
</dbReference>
<dbReference type="STRING" id="511145.b3679"/>
<dbReference type="TCDB" id="2.A.21.3.21">
    <property type="family name" value="the solute:sodium symporter (sss) family"/>
</dbReference>
<dbReference type="PaxDb" id="511145-b3679"/>
<dbReference type="EnsemblBacteria" id="AAC76702">
    <property type="protein sequence ID" value="AAC76702"/>
    <property type="gene ID" value="b3679"/>
</dbReference>
<dbReference type="GeneID" id="948185"/>
<dbReference type="KEGG" id="ecj:JW3655"/>
<dbReference type="KEGG" id="eco:b3679"/>
<dbReference type="KEGG" id="ecoc:C3026_19950"/>
<dbReference type="PATRIC" id="fig|1411691.4.peg.3025"/>
<dbReference type="EchoBASE" id="EB1657"/>
<dbReference type="eggNOG" id="COG4146">
    <property type="taxonomic scope" value="Bacteria"/>
</dbReference>
<dbReference type="HOGENOM" id="CLU_018808_9_3_6"/>
<dbReference type="InParanoid" id="P31448"/>
<dbReference type="OMA" id="WKRMTPT"/>
<dbReference type="OrthoDB" id="9814523at2"/>
<dbReference type="PhylomeDB" id="P31448"/>
<dbReference type="BioCyc" id="EcoCyc:YIDK-MONOMER"/>
<dbReference type="PRO" id="PR:P31448"/>
<dbReference type="Proteomes" id="UP000000625">
    <property type="component" value="Chromosome"/>
</dbReference>
<dbReference type="GO" id="GO:0005886">
    <property type="term" value="C:plasma membrane"/>
    <property type="evidence" value="ECO:0000314"/>
    <property type="project" value="EcoCyc"/>
</dbReference>
<dbReference type="GO" id="GO:0005412">
    <property type="term" value="F:D-glucose:sodium symporter activity"/>
    <property type="evidence" value="ECO:0000318"/>
    <property type="project" value="GO_Central"/>
</dbReference>
<dbReference type="CDD" id="cd10328">
    <property type="entry name" value="SLC5sbd_YidK"/>
    <property type="match status" value="1"/>
</dbReference>
<dbReference type="FunFam" id="1.20.1730.10:FF:000017">
    <property type="entry name" value="Solute:sodium symporter family transporter"/>
    <property type="match status" value="1"/>
</dbReference>
<dbReference type="Gene3D" id="1.20.1730.10">
    <property type="entry name" value="Sodium/glucose cotransporter"/>
    <property type="match status" value="1"/>
</dbReference>
<dbReference type="InterPro" id="IPR038377">
    <property type="entry name" value="Na/Glc_symporter_sf"/>
</dbReference>
<dbReference type="InterPro" id="IPR001734">
    <property type="entry name" value="Na/solute_symporter"/>
</dbReference>
<dbReference type="InterPro" id="IPR018212">
    <property type="entry name" value="Na/solute_symporter_CS"/>
</dbReference>
<dbReference type="NCBIfam" id="NF007790">
    <property type="entry name" value="PRK10484.1"/>
    <property type="match status" value="1"/>
</dbReference>
<dbReference type="NCBIfam" id="TIGR00813">
    <property type="entry name" value="sss"/>
    <property type="match status" value="1"/>
</dbReference>
<dbReference type="PANTHER" id="PTHR11819:SF195">
    <property type="entry name" value="SODIUM_GLUCOSE COTRANSPORTER 4"/>
    <property type="match status" value="1"/>
</dbReference>
<dbReference type="PANTHER" id="PTHR11819">
    <property type="entry name" value="SOLUTE CARRIER FAMILY 5"/>
    <property type="match status" value="1"/>
</dbReference>
<dbReference type="Pfam" id="PF00474">
    <property type="entry name" value="SSF"/>
    <property type="match status" value="1"/>
</dbReference>
<dbReference type="PROSITE" id="PS00456">
    <property type="entry name" value="NA_SOLUT_SYMP_1"/>
    <property type="match status" value="1"/>
</dbReference>
<dbReference type="PROSITE" id="PS50283">
    <property type="entry name" value="NA_SOLUT_SYMP_3"/>
    <property type="match status" value="1"/>
</dbReference>
<organism>
    <name type="scientific">Escherichia coli (strain K12)</name>
    <dbReference type="NCBI Taxonomy" id="83333"/>
    <lineage>
        <taxon>Bacteria</taxon>
        <taxon>Pseudomonadati</taxon>
        <taxon>Pseudomonadota</taxon>
        <taxon>Gammaproteobacteria</taxon>
        <taxon>Enterobacterales</taxon>
        <taxon>Enterobacteriaceae</taxon>
        <taxon>Escherichia</taxon>
    </lineage>
</organism>
<sequence length="571" mass="62085">MNSLQILSFVGFTLLVAVITWWKVRKTDTGSQQGYFLAGRSLKAPVIAASLMLTNLSTEQLVGLSGQAYKSGMSVMGWEVTSAVTLIFLALIFLPRYLKRGIATIPDFLEERYDKTTRIIIDFCFLIATGVCFLPIVLYSGALALNSLFHVGESLQISHGAAIWLLVILLGLAGILYAVIGGLRAMAVADSINGIGLVIGGLMVPVFGLIAMGKGSFMQGIEQLTTVHAEKLNSIGGPTDPLPIGAAFTGLILVNTFYWCTNQGIVQRTLASKSLAEGQKGALLTAVLKMLDPLVLVLPGLIAFHLYQDLPKADMAYPTLVNNVLPVPMVGFFGAVLFGAVISTFNGFLNSASTLFSMGIYRRIINQNAEPQQLVTVGRKFGFFIAIVSVLVAPWIANAPQGLYSWMKQLNGIYNVPLVTIIIMGFFFPRIPALAAKVAMGIGIISYITINYLVKFDFHFLYVLACTFCINVVVMLVIGFIKPRATPFTFKDAFAVDMKPWKNVKIASIGILFAMIGVYAGLAEFGGYGTRWLAMISYFIAAVVIVYLIFDSWRHRHDPAVTFTPDGKDSL</sequence>